<accession>P24518</accession>
<sequence length="410" mass="47101">MSSFDYLKTAIKQQGCTLQQVADASGMTKGYLSQLLNAKIKSPSAQKLEALHRFLGLEFPRRQKNIGVVFGKFYPLHTGHIYLIQRACSQVDELHIIMGYDDTRDRGLFEDSAMSQQPTVSDRLRWLLQTFKYQKNIRIHAFNEEGMEPYPHGWDVWSNGIKAFMAEKGIQPSWIYTSEEADAPQYLEHLGIETVLVDPERTFMNISGAQIRENPFRYWEYIPTEVKPFFVRTVAILGGESSGKSTLVNKLANIFNTTSAWEYGRDYVFSHLGGDEMALQYSDYDKIALGHAQYIDFAVKYANKVAFIDTDFVTTQAFCKKYEGREHPFVQALIDEYRFDLVILLENNTPWVADGLRSLGSSVDRKAFQNLLVEMLKENNIEFVHVKEADYDGRFLRCVELVKEMMGEQG</sequence>
<protein>
    <recommendedName>
        <fullName>Trifunctional NAD biosynthesis/regulator protein NadR</fullName>
    </recommendedName>
    <domain>
        <recommendedName>
            <fullName>Transcriptional regulator NadR</fullName>
        </recommendedName>
    </domain>
    <domain>
        <recommendedName>
            <fullName>Nicotinamide mononucleotide adenylyltransferase</fullName>
            <shortName>NMN adenylyltransferase</shortName>
            <shortName>NMN-AT</shortName>
            <shortName>NMNAT</shortName>
            <ecNumber>2.7.7.1</ecNumber>
        </recommendedName>
        <alternativeName>
            <fullName>Nicotinamide ribonucleotide adenylyltransferase</fullName>
        </alternativeName>
        <alternativeName>
            <fullName>Nicotinamide-nucleotide adenylyltransferase</fullName>
        </alternativeName>
    </domain>
    <domain>
        <recommendedName>
            <fullName>Ribosylnicotinamide kinase</fullName>
            <shortName>RNK</shortName>
            <ecNumber>2.7.1.22</ecNumber>
        </recommendedName>
        <alternativeName>
            <fullName>Nicotinamide riboside kinase</fullName>
            <shortName>NRK</shortName>
            <shortName>NmR-K</shortName>
        </alternativeName>
    </domain>
</protein>
<keyword id="KW-0067">ATP-binding</keyword>
<keyword id="KW-1003">Cell membrane</keyword>
<keyword id="KW-0963">Cytoplasm</keyword>
<keyword id="KW-0238">DNA-binding</keyword>
<keyword id="KW-0418">Kinase</keyword>
<keyword id="KW-0472">Membrane</keyword>
<keyword id="KW-0511">Multifunctional enzyme</keyword>
<keyword id="KW-0520">NAD</keyword>
<keyword id="KW-0547">Nucleotide-binding</keyword>
<keyword id="KW-0662">Pyridine nucleotide biosynthesis</keyword>
<keyword id="KW-1185">Reference proteome</keyword>
<keyword id="KW-0678">Repressor</keyword>
<keyword id="KW-0804">Transcription</keyword>
<keyword id="KW-0805">Transcription regulation</keyword>
<keyword id="KW-0808">Transferase</keyword>
<name>NADR_SALTY</name>
<organism>
    <name type="scientific">Salmonella typhimurium (strain LT2 / SGSC1412 / ATCC 700720)</name>
    <dbReference type="NCBI Taxonomy" id="99287"/>
    <lineage>
        <taxon>Bacteria</taxon>
        <taxon>Pseudomonadati</taxon>
        <taxon>Pseudomonadota</taxon>
        <taxon>Gammaproteobacteria</taxon>
        <taxon>Enterobacterales</taxon>
        <taxon>Enterobacteriaceae</taxon>
        <taxon>Salmonella</taxon>
    </lineage>
</organism>
<dbReference type="EC" id="2.7.7.1"/>
<dbReference type="EC" id="2.7.1.22"/>
<dbReference type="EMBL" id="M85181">
    <property type="protein sequence ID" value="AAA61953.1"/>
    <property type="molecule type" value="Genomic_DNA"/>
</dbReference>
<dbReference type="EMBL" id="AE006468">
    <property type="protein sequence ID" value="AAL23395.1"/>
    <property type="molecule type" value="Genomic_DNA"/>
</dbReference>
<dbReference type="PIR" id="B37753">
    <property type="entry name" value="B37753"/>
</dbReference>
<dbReference type="RefSeq" id="NP_463436.5">
    <property type="nucleotide sequence ID" value="NC_003197.2"/>
</dbReference>
<dbReference type="RefSeq" id="WP_000093829.1">
    <property type="nucleotide sequence ID" value="NC_003197.2"/>
</dbReference>
<dbReference type="SMR" id="P24518"/>
<dbReference type="STRING" id="99287.STM4580"/>
<dbReference type="TCDB" id="4.B.1.1.1">
    <property type="family name" value="the nicotinamide ribonucleoside (nr) uptake permease (pnuc) family"/>
</dbReference>
<dbReference type="PaxDb" id="99287-STM4580"/>
<dbReference type="GeneID" id="1256106"/>
<dbReference type="KEGG" id="stm:STM4580"/>
<dbReference type="HOGENOM" id="CLU_052648_0_1_6"/>
<dbReference type="PhylomeDB" id="P24518"/>
<dbReference type="BioCyc" id="SENT99287:STM4580-MONOMER"/>
<dbReference type="SABIO-RK" id="P24518"/>
<dbReference type="UniPathway" id="UPA00253"/>
<dbReference type="UniPathway" id="UPA00253">
    <property type="reaction ID" value="UER00600"/>
</dbReference>
<dbReference type="Proteomes" id="UP000001014">
    <property type="component" value="Chromosome"/>
</dbReference>
<dbReference type="GO" id="GO:0005737">
    <property type="term" value="C:cytoplasm"/>
    <property type="evidence" value="ECO:0007669"/>
    <property type="project" value="UniProtKB-SubCell"/>
</dbReference>
<dbReference type="GO" id="GO:0005886">
    <property type="term" value="C:plasma membrane"/>
    <property type="evidence" value="ECO:0007669"/>
    <property type="project" value="UniProtKB-SubCell"/>
</dbReference>
<dbReference type="GO" id="GO:0005524">
    <property type="term" value="F:ATP binding"/>
    <property type="evidence" value="ECO:0007669"/>
    <property type="project" value="UniProtKB-KW"/>
</dbReference>
<dbReference type="GO" id="GO:0003677">
    <property type="term" value="F:DNA binding"/>
    <property type="evidence" value="ECO:0007669"/>
    <property type="project" value="UniProtKB-KW"/>
</dbReference>
<dbReference type="GO" id="GO:0000309">
    <property type="term" value="F:nicotinamide-nucleotide adenylyltransferase activity"/>
    <property type="evidence" value="ECO:0000318"/>
    <property type="project" value="GO_Central"/>
</dbReference>
<dbReference type="GO" id="GO:0050262">
    <property type="term" value="F:ribosylnicotinamide kinase activity"/>
    <property type="evidence" value="ECO:0007669"/>
    <property type="project" value="UniProtKB-EC"/>
</dbReference>
<dbReference type="GO" id="GO:0009435">
    <property type="term" value="P:NAD biosynthetic process"/>
    <property type="evidence" value="ECO:0007669"/>
    <property type="project" value="UniProtKB-UniPathway"/>
</dbReference>
<dbReference type="CDD" id="cd00093">
    <property type="entry name" value="HTH_XRE"/>
    <property type="match status" value="1"/>
</dbReference>
<dbReference type="CDD" id="cd02019">
    <property type="entry name" value="NK"/>
    <property type="match status" value="1"/>
</dbReference>
<dbReference type="CDD" id="cd02167">
    <property type="entry name" value="NMNAT_NadR"/>
    <property type="match status" value="1"/>
</dbReference>
<dbReference type="FunFam" id="1.10.260.40:FF:000020">
    <property type="entry name" value="Trifunctional nicotinamide-nucleotide adenylyltransferase/ribosylnicotinamide kinase/transcriptional regulator NadR"/>
    <property type="match status" value="1"/>
</dbReference>
<dbReference type="FunFam" id="3.40.50.300:FF:000672">
    <property type="entry name" value="Trifunctional nicotinamide-nucleotide adenylyltransferase/ribosylnicotinamide kinase/transcriptional regulator NadR"/>
    <property type="match status" value="1"/>
</dbReference>
<dbReference type="FunFam" id="3.40.50.620:FF:000091">
    <property type="entry name" value="Trifunctional nicotinamide-nucleotide adenylyltransferase/ribosylnicotinamide kinase/transcriptional regulator NadR"/>
    <property type="match status" value="1"/>
</dbReference>
<dbReference type="Gene3D" id="3.40.50.620">
    <property type="entry name" value="HUPs"/>
    <property type="match status" value="1"/>
</dbReference>
<dbReference type="Gene3D" id="1.10.260.40">
    <property type="entry name" value="lambda repressor-like DNA-binding domains"/>
    <property type="match status" value="1"/>
</dbReference>
<dbReference type="Gene3D" id="3.40.50.300">
    <property type="entry name" value="P-loop containing nucleotide triphosphate hydrolases"/>
    <property type="match status" value="1"/>
</dbReference>
<dbReference type="InterPro" id="IPR001387">
    <property type="entry name" value="Cro/C1-type_HTH"/>
</dbReference>
<dbReference type="InterPro" id="IPR004821">
    <property type="entry name" value="Cyt_trans-like"/>
</dbReference>
<dbReference type="InterPro" id="IPR010982">
    <property type="entry name" value="Lambda_DNA-bd_dom_sf"/>
</dbReference>
<dbReference type="InterPro" id="IPR052735">
    <property type="entry name" value="NAD_biosynth-regulator"/>
</dbReference>
<dbReference type="InterPro" id="IPR016429">
    <property type="entry name" value="NAD_NadR"/>
</dbReference>
<dbReference type="InterPro" id="IPR038727">
    <property type="entry name" value="NadR/Ttd14_AAA_dom"/>
</dbReference>
<dbReference type="InterPro" id="IPR006417">
    <property type="entry name" value="NadR_NMN_Atrans"/>
</dbReference>
<dbReference type="InterPro" id="IPR041749">
    <property type="entry name" value="NMNAT_NadR"/>
</dbReference>
<dbReference type="InterPro" id="IPR027417">
    <property type="entry name" value="P-loop_NTPase"/>
</dbReference>
<dbReference type="InterPro" id="IPR014729">
    <property type="entry name" value="Rossmann-like_a/b/a_fold"/>
</dbReference>
<dbReference type="NCBIfam" id="TIGR00125">
    <property type="entry name" value="cyt_tran_rel"/>
    <property type="match status" value="1"/>
</dbReference>
<dbReference type="NCBIfam" id="TIGR01526">
    <property type="entry name" value="nadR_NMN_Atrans"/>
    <property type="match status" value="1"/>
</dbReference>
<dbReference type="NCBIfam" id="NF005988">
    <property type="entry name" value="PRK08099.1"/>
    <property type="match status" value="1"/>
</dbReference>
<dbReference type="PANTHER" id="PTHR37512:SF1">
    <property type="entry name" value="NADR_TTD14 AAA DOMAIN-CONTAINING PROTEIN"/>
    <property type="match status" value="1"/>
</dbReference>
<dbReference type="PANTHER" id="PTHR37512">
    <property type="entry name" value="TRIFUNCTIONAL NAD BIOSYNTHESIS/REGULATOR PROTEIN NADR"/>
    <property type="match status" value="1"/>
</dbReference>
<dbReference type="Pfam" id="PF13521">
    <property type="entry name" value="AAA_28"/>
    <property type="match status" value="1"/>
</dbReference>
<dbReference type="Pfam" id="PF01381">
    <property type="entry name" value="HTH_3"/>
    <property type="match status" value="1"/>
</dbReference>
<dbReference type="PIRSF" id="PIRSF004776">
    <property type="entry name" value="NadR_NMNAT/RNK"/>
    <property type="match status" value="1"/>
</dbReference>
<dbReference type="SMART" id="SM00530">
    <property type="entry name" value="HTH_XRE"/>
    <property type="match status" value="1"/>
</dbReference>
<dbReference type="SUPFAM" id="SSF47413">
    <property type="entry name" value="lambda repressor-like DNA-binding domains"/>
    <property type="match status" value="1"/>
</dbReference>
<dbReference type="SUPFAM" id="SSF52374">
    <property type="entry name" value="Nucleotidylyl transferase"/>
    <property type="match status" value="1"/>
</dbReference>
<dbReference type="SUPFAM" id="SSF52540">
    <property type="entry name" value="P-loop containing nucleoside triphosphate hydrolases"/>
    <property type="match status" value="1"/>
</dbReference>
<dbReference type="PROSITE" id="PS50943">
    <property type="entry name" value="HTH_CROC1"/>
    <property type="match status" value="1"/>
</dbReference>
<comment type="function">
    <text evidence="4">This enzyme has three activities: DNA binding, nicotinamide mononucleotide (NMN) adenylyltransferase and ribosylnicotinamide (RN) kinase. The DNA-binding domain binds to the nadB operator sequence in an NAD- and ATP-dependent manner. As NAD levels increase within the cell, the affinity of NadR for the nadB operator regions of nadA, nadB, and pncB increases, repressing the transcription of these genes. The RN kinase activity catalyzes the phosphorylation of RN to form nicotinamide ribonucleotide. The NMN adenylyltransferase activity catalyzes the transfer of the AMP moiety of ATP to nicotinamide ribonucleotide to form NAD(+). The NMN adenylyltransferase domain also functions as the NAD and ATP sensor.</text>
</comment>
<comment type="catalytic activity">
    <reaction evidence="4">
        <text>beta-nicotinamide D-ribonucleotide + ATP + H(+) = diphosphate + NAD(+)</text>
        <dbReference type="Rhea" id="RHEA:21360"/>
        <dbReference type="ChEBI" id="CHEBI:14649"/>
        <dbReference type="ChEBI" id="CHEBI:15378"/>
        <dbReference type="ChEBI" id="CHEBI:30616"/>
        <dbReference type="ChEBI" id="CHEBI:33019"/>
        <dbReference type="ChEBI" id="CHEBI:57540"/>
        <dbReference type="EC" id="2.7.7.1"/>
    </reaction>
</comment>
<comment type="catalytic activity">
    <reaction evidence="4">
        <text>beta-nicotinamide D-riboside + ATP = beta-nicotinamide D-ribonucleotide + ADP + H(+)</text>
        <dbReference type="Rhea" id="RHEA:14017"/>
        <dbReference type="ChEBI" id="CHEBI:14649"/>
        <dbReference type="ChEBI" id="CHEBI:15378"/>
        <dbReference type="ChEBI" id="CHEBI:15927"/>
        <dbReference type="ChEBI" id="CHEBI:30616"/>
        <dbReference type="ChEBI" id="CHEBI:456216"/>
        <dbReference type="EC" id="2.7.1.22"/>
    </reaction>
</comment>
<comment type="activity regulation">
    <text>Feed-back regulated by NAD. A high level of NAD causes NadR to lose enzymatic activity and repress several NAD synthetic genes; conversely, a low NAD level activates the assimilatory enzymatic activities and leads to derepression of biosynthetic genes.</text>
</comment>
<comment type="biophysicochemical properties">
    <kinetics>
        <KM evidence="4">0.08 mM for ribosylnicotinamide</KM>
        <KM evidence="4">1.2 mM for ATP (with ribosylnicotinamide as cosubstrate)</KM>
        <KM evidence="4">12.8 mM for NMN</KM>
        <KM evidence="4">1.2 uM for ATP (with NMN as cosubstrate)</KM>
    </kinetics>
</comment>
<comment type="pathway">
    <text>Cofactor biosynthesis; NAD(+) biosynthesis [regulation].</text>
</comment>
<comment type="pathway">
    <text>Cofactor biosynthesis; NAD(+) biosynthesis; NAD(+) from nicotinamide D-ribonucleotide: step 1/1.</text>
</comment>
<comment type="subunit">
    <text evidence="1">Homotetramer.</text>
</comment>
<comment type="subcellular location">
    <subcellularLocation>
        <location>Cell membrane</location>
        <topology>Peripheral membrane protein</topology>
    </subcellularLocation>
    <subcellularLocation>
        <location evidence="1">Cytoplasm</location>
    </subcellularLocation>
</comment>
<comment type="similarity">
    <text evidence="6">In the central section; belongs to the bacterial NMN adenylyltransferase family.</text>
</comment>
<comment type="similarity">
    <text evidence="6">In the C-terminal section; belongs to the bacterial RNK family.</text>
</comment>
<evidence type="ECO:0000250" key="1"/>
<evidence type="ECO:0000255" key="2">
    <source>
        <dbReference type="PROSITE-ProRule" id="PRU00257"/>
    </source>
</evidence>
<evidence type="ECO:0000269" key="3">
    <source>
    </source>
</evidence>
<evidence type="ECO:0000269" key="4">
    <source>
    </source>
</evidence>
<evidence type="ECO:0000269" key="5">
    <source>
    </source>
</evidence>
<evidence type="ECO:0000305" key="6"/>
<proteinExistence type="evidence at protein level"/>
<feature type="chain" id="PRO_0000149729" description="Trifunctional NAD biosynthesis/regulator protein NadR">
    <location>
        <begin position="1"/>
        <end position="410"/>
    </location>
</feature>
<feature type="domain" description="HTH cro/C1-type" evidence="2">
    <location>
        <begin position="7"/>
        <end position="62"/>
    </location>
</feature>
<feature type="DNA-binding region" description="H-T-H motif" evidence="6">
    <location>
        <begin position="18"/>
        <end position="37"/>
    </location>
</feature>
<feature type="region of interest" description="Nicotinamide mononucleotide adenylyltransferase">
    <location>
        <begin position="63"/>
        <end position="229"/>
    </location>
</feature>
<feature type="region of interest" description="Ribosylnicotinamide kinase">
    <location>
        <begin position="230"/>
        <end position="410"/>
    </location>
</feature>
<feature type="binding site" evidence="1">
    <location>
        <begin position="70"/>
        <end position="73"/>
    </location>
    <ligand>
        <name>NAD(+)</name>
        <dbReference type="ChEBI" id="CHEBI:57540"/>
        <label>1</label>
    </ligand>
</feature>
<feature type="binding site" evidence="1">
    <location>
        <position position="77"/>
    </location>
    <ligand>
        <name>NAD(+)</name>
        <dbReference type="ChEBI" id="CHEBI:57540"/>
        <label>1</label>
    </ligand>
</feature>
<feature type="binding site" evidence="1">
    <location>
        <position position="104"/>
    </location>
    <ligand>
        <name>NAD(+)</name>
        <dbReference type="ChEBI" id="CHEBI:57540"/>
        <label>1</label>
    </ligand>
</feature>
<feature type="binding site" evidence="1">
    <location>
        <begin position="144"/>
        <end position="157"/>
    </location>
    <ligand>
        <name>NAD(+)</name>
        <dbReference type="ChEBI" id="CHEBI:57540"/>
        <label>1</label>
    </ligand>
</feature>
<feature type="binding site" evidence="1">
    <location>
        <begin position="177"/>
        <end position="179"/>
    </location>
    <ligand>
        <name>NAD(+)</name>
        <dbReference type="ChEBI" id="CHEBI:57540"/>
        <label>1</label>
    </ligand>
</feature>
<feature type="binding site" evidence="1">
    <location>
        <begin position="204"/>
        <end position="206"/>
    </location>
    <ligand>
        <name>NAD(+)</name>
        <dbReference type="ChEBI" id="CHEBI:57540"/>
        <label>1</label>
    </ligand>
</feature>
<feature type="binding site" evidence="1">
    <location>
        <begin position="259"/>
        <end position="261"/>
    </location>
    <ligand>
        <name>NAD(+)</name>
        <dbReference type="ChEBI" id="CHEBI:57540"/>
        <label>2</label>
    </ligand>
</feature>
<feature type="binding site" evidence="1">
    <location>
        <begin position="294"/>
        <end position="297"/>
    </location>
    <ligand>
        <name>NAD(+)</name>
        <dbReference type="ChEBI" id="CHEBI:57540"/>
        <label>2</label>
    </ligand>
</feature>
<feature type="mutagenesis site" description="Loss of DNA binding activity." evidence="5">
    <original>V</original>
    <variation>M</variation>
    <location>
        <position position="21"/>
    </location>
</feature>
<feature type="mutagenesis site" description="Loss of DNA binding activity." evidence="5">
    <original>A</original>
    <variation>T</variation>
    <location>
        <position position="22"/>
    </location>
</feature>
<feature type="mutagenesis site" description="Loss of DNA binding activity." evidence="5">
    <original>P</original>
    <variation>L</variation>
    <location>
        <position position="43"/>
    </location>
</feature>
<feature type="mutagenesis site" description="Complete loss of NMN adenylyltransferase activity." evidence="3">
    <original>H</original>
    <variation>A</variation>
    <location>
        <position position="77"/>
    </location>
</feature>
<feature type="mutagenesis site" description="Complete loss of NMN adenylyltransferase activity." evidence="3">
    <original>H</original>
    <variation>A</variation>
    <location>
        <position position="80"/>
    </location>
</feature>
<feature type="mutagenesis site" description="No NMN adenylyltransferase activity. Binds DNA independently of NAD; when associated with N-173." evidence="5">
    <original>R</original>
    <variation>H</variation>
    <location>
        <position position="123"/>
    </location>
</feature>
<feature type="mutagenesis site" description="No NMN adenylyltransferase activity. Binds DNA independently of NAD; when associated with H-123." evidence="5">
    <original>S</original>
    <variation>N</variation>
    <location>
        <position position="173"/>
    </location>
</feature>
<feature type="mutagenesis site" description="No NMN adenylyltransferase activity. Binds DNA independently of NAD." evidence="5">
    <original>R</original>
    <variation>C</variation>
    <location>
        <position position="212"/>
    </location>
</feature>
<feature type="mutagenesis site" description="No RN kinase activity." evidence="5">
    <original>G</original>
    <variation>D</variation>
    <location>
        <position position="264"/>
    </location>
</feature>
<feature type="mutagenesis site" description="Affects RN kinase activity." evidence="5">
    <original>D</original>
    <variation>N</variation>
    <location>
        <position position="354"/>
    </location>
</feature>
<feature type="sequence conflict" description="In Ref. 1; AAA61953." evidence="6" ref="1">
    <original>ADA</original>
    <variation>LT</variation>
    <location>
        <begin position="22"/>
        <end position="24"/>
    </location>
</feature>
<gene>
    <name type="primary">nadR</name>
    <name type="synonym">nadI</name>
    <name type="synonym">pnuA</name>
    <name type="ordered locus">STM4580</name>
</gene>
<reference key="1">
    <citation type="journal article" date="1990" name="J. Bacteriol.">
        <title>Regulation of NAD metabolism in Salmonella typhimurium: molecular sequence analysis of the bifunctional nadR regulator and the nadA-pnuC operon.</title>
        <authorList>
            <person name="Foster J.W."/>
            <person name="Park Y.K."/>
            <person name="Penfound T."/>
            <person name="Fenger T."/>
            <person name="Spector M.P."/>
        </authorList>
    </citation>
    <scope>NUCLEOTIDE SEQUENCE [GENOMIC DNA]</scope>
    <source>
        <strain>LT2</strain>
    </source>
</reference>
<reference key="2">
    <citation type="journal article" date="2001" name="Nature">
        <title>Complete genome sequence of Salmonella enterica serovar Typhimurium LT2.</title>
        <authorList>
            <person name="McClelland M."/>
            <person name="Sanderson K.E."/>
            <person name="Spieth J."/>
            <person name="Clifton S.W."/>
            <person name="Latreille P."/>
            <person name="Courtney L."/>
            <person name="Porwollik S."/>
            <person name="Ali J."/>
            <person name="Dante M."/>
            <person name="Du F."/>
            <person name="Hou S."/>
            <person name="Layman D."/>
            <person name="Leonard S."/>
            <person name="Nguyen C."/>
            <person name="Scott K."/>
            <person name="Holmes A."/>
            <person name="Grewal N."/>
            <person name="Mulvaney E."/>
            <person name="Ryan E."/>
            <person name="Sun H."/>
            <person name="Florea L."/>
            <person name="Miller W."/>
            <person name="Stoneking T."/>
            <person name="Nhan M."/>
            <person name="Waterston R."/>
            <person name="Wilson R.K."/>
        </authorList>
    </citation>
    <scope>NUCLEOTIDE SEQUENCE [LARGE SCALE GENOMIC DNA]</scope>
    <source>
        <strain>LT2 / SGSC1412 / ATCC 700720</strain>
    </source>
</reference>
<reference key="3">
    <citation type="journal article" date="1991" name="J. Bacteriol.">
        <title>The nadI region of Salmonella typhimurium encodes a bifunctional regulatory protein.</title>
        <authorList>
            <person name="Zhu N."/>
            <person name="Roth J.R."/>
        </authorList>
    </citation>
    <scope>CHARACTERIZATION</scope>
    <scope>MUTAGENESIS</scope>
</reference>
<reference key="4">
    <citation type="journal article" date="2002" name="J. Bacteriol.">
        <title>Ribosylnicotinamide kinase domain of NadR protein: identification and implications in NAD biosynthesis.</title>
        <authorList>
            <person name="Kurnasov O.V."/>
            <person name="Polanuyer B.M."/>
            <person name="Ananta S."/>
            <person name="Sloutsky R."/>
            <person name="Tam A."/>
            <person name="Gerdes S.Y."/>
            <person name="Osterman A.L."/>
        </authorList>
    </citation>
    <scope>MUTAGENESIS OF HIS-77 AND HIS-80</scope>
</reference>
<reference key="5">
    <citation type="journal article" date="2005" name="J. Bacteriol.">
        <title>Regulation of NAD synthesis by the trifunctional NadR protein of Salmonella enterica.</title>
        <authorList>
            <person name="Grose J.H."/>
            <person name="Bergthorsson U."/>
            <person name="Roth J.R."/>
        </authorList>
    </citation>
    <scope>FUNCTION</scope>
    <scope>CATALYTIC ACTIVITY</scope>
    <scope>BIOPHYSICOCHEMICAL PROPERTIES</scope>
</reference>